<name>RL7_CLOPS</name>
<comment type="function">
    <text evidence="1">Forms part of the ribosomal stalk which helps the ribosome interact with GTP-bound translation factors. Is thus essential for accurate translation.</text>
</comment>
<comment type="subunit">
    <text evidence="1">Homodimer. Part of the ribosomal stalk of the 50S ribosomal subunit. Forms a multimeric L10(L12)X complex, where L10 forms an elongated spine to which 2 to 4 L12 dimers bind in a sequential fashion. Binds GTP-bound translation factors.</text>
</comment>
<comment type="similarity">
    <text evidence="1">Belongs to the bacterial ribosomal protein bL12 family.</text>
</comment>
<reference key="1">
    <citation type="journal article" date="2006" name="Genome Res.">
        <title>Skewed genomic variability in strains of the toxigenic bacterial pathogen, Clostridium perfringens.</title>
        <authorList>
            <person name="Myers G.S.A."/>
            <person name="Rasko D.A."/>
            <person name="Cheung J.K."/>
            <person name="Ravel J."/>
            <person name="Seshadri R."/>
            <person name="DeBoy R.T."/>
            <person name="Ren Q."/>
            <person name="Varga J."/>
            <person name="Awad M.M."/>
            <person name="Brinkac L.M."/>
            <person name="Daugherty S.C."/>
            <person name="Haft D.H."/>
            <person name="Dodson R.J."/>
            <person name="Madupu R."/>
            <person name="Nelson W.C."/>
            <person name="Rosovitz M.J."/>
            <person name="Sullivan S.A."/>
            <person name="Khouri H."/>
            <person name="Dimitrov G.I."/>
            <person name="Watkins K.L."/>
            <person name="Mulligan S."/>
            <person name="Benton J."/>
            <person name="Radune D."/>
            <person name="Fisher D.J."/>
            <person name="Atkins H.S."/>
            <person name="Hiscox T."/>
            <person name="Jost B.H."/>
            <person name="Billington S.J."/>
            <person name="Songer J.G."/>
            <person name="McClane B.A."/>
            <person name="Titball R.W."/>
            <person name="Rood J.I."/>
            <person name="Melville S.B."/>
            <person name="Paulsen I.T."/>
        </authorList>
    </citation>
    <scope>NUCLEOTIDE SEQUENCE [LARGE SCALE GENOMIC DNA]</scope>
    <source>
        <strain>SM101 / Type A</strain>
    </source>
</reference>
<organism>
    <name type="scientific">Clostridium perfringens (strain SM101 / Type A)</name>
    <dbReference type="NCBI Taxonomy" id="289380"/>
    <lineage>
        <taxon>Bacteria</taxon>
        <taxon>Bacillati</taxon>
        <taxon>Bacillota</taxon>
        <taxon>Clostridia</taxon>
        <taxon>Eubacteriales</taxon>
        <taxon>Clostridiaceae</taxon>
        <taxon>Clostridium</taxon>
    </lineage>
</organism>
<evidence type="ECO:0000255" key="1">
    <source>
        <dbReference type="HAMAP-Rule" id="MF_00368"/>
    </source>
</evidence>
<evidence type="ECO:0000305" key="2"/>
<proteinExistence type="inferred from homology"/>
<feature type="chain" id="PRO_1000006994" description="Large ribosomal subunit protein bL12">
    <location>
        <begin position="1"/>
        <end position="121"/>
    </location>
</feature>
<gene>
    <name evidence="1" type="primary">rplL</name>
    <name type="ordered locus">CPR_2409</name>
</gene>
<protein>
    <recommendedName>
        <fullName evidence="1">Large ribosomal subunit protein bL12</fullName>
    </recommendedName>
    <alternativeName>
        <fullName evidence="2">50S ribosomal protein L7/L12</fullName>
    </alternativeName>
</protein>
<dbReference type="EMBL" id="CP000312">
    <property type="protein sequence ID" value="ABG87385.1"/>
    <property type="molecule type" value="Genomic_DNA"/>
</dbReference>
<dbReference type="RefSeq" id="WP_003452170.1">
    <property type="nucleotide sequence ID" value="NZ_CAXVKH010000004.1"/>
</dbReference>
<dbReference type="SMR" id="Q0SQD5"/>
<dbReference type="GeneID" id="93001000"/>
<dbReference type="KEGG" id="cpr:CPR_2409"/>
<dbReference type="Proteomes" id="UP000001824">
    <property type="component" value="Chromosome"/>
</dbReference>
<dbReference type="GO" id="GO:0022625">
    <property type="term" value="C:cytosolic large ribosomal subunit"/>
    <property type="evidence" value="ECO:0007669"/>
    <property type="project" value="TreeGrafter"/>
</dbReference>
<dbReference type="GO" id="GO:0003729">
    <property type="term" value="F:mRNA binding"/>
    <property type="evidence" value="ECO:0007669"/>
    <property type="project" value="TreeGrafter"/>
</dbReference>
<dbReference type="GO" id="GO:0003735">
    <property type="term" value="F:structural constituent of ribosome"/>
    <property type="evidence" value="ECO:0007669"/>
    <property type="project" value="InterPro"/>
</dbReference>
<dbReference type="GO" id="GO:0006412">
    <property type="term" value="P:translation"/>
    <property type="evidence" value="ECO:0007669"/>
    <property type="project" value="UniProtKB-UniRule"/>
</dbReference>
<dbReference type="CDD" id="cd00387">
    <property type="entry name" value="Ribosomal_L7_L12"/>
    <property type="match status" value="1"/>
</dbReference>
<dbReference type="FunFam" id="1.20.5.710:FF:000002">
    <property type="entry name" value="50S ribosomal protein L7/L12"/>
    <property type="match status" value="1"/>
</dbReference>
<dbReference type="FunFam" id="3.30.1390.10:FF:000001">
    <property type="entry name" value="50S ribosomal protein L7/L12"/>
    <property type="match status" value="1"/>
</dbReference>
<dbReference type="Gene3D" id="3.30.1390.10">
    <property type="match status" value="1"/>
</dbReference>
<dbReference type="Gene3D" id="1.20.5.710">
    <property type="entry name" value="Single helix bin"/>
    <property type="match status" value="1"/>
</dbReference>
<dbReference type="HAMAP" id="MF_00368">
    <property type="entry name" value="Ribosomal_bL12"/>
    <property type="match status" value="1"/>
</dbReference>
<dbReference type="InterPro" id="IPR000206">
    <property type="entry name" value="Ribosomal_bL12"/>
</dbReference>
<dbReference type="InterPro" id="IPR013823">
    <property type="entry name" value="Ribosomal_bL12_C"/>
</dbReference>
<dbReference type="InterPro" id="IPR014719">
    <property type="entry name" value="Ribosomal_bL12_C/ClpS-like"/>
</dbReference>
<dbReference type="InterPro" id="IPR008932">
    <property type="entry name" value="Ribosomal_bL12_oligo"/>
</dbReference>
<dbReference type="InterPro" id="IPR036235">
    <property type="entry name" value="Ribosomal_bL12_oligo_N_sf"/>
</dbReference>
<dbReference type="NCBIfam" id="TIGR00855">
    <property type="entry name" value="L12"/>
    <property type="match status" value="1"/>
</dbReference>
<dbReference type="PANTHER" id="PTHR45987">
    <property type="entry name" value="39S RIBOSOMAL PROTEIN L12"/>
    <property type="match status" value="1"/>
</dbReference>
<dbReference type="PANTHER" id="PTHR45987:SF4">
    <property type="entry name" value="LARGE RIBOSOMAL SUBUNIT PROTEIN BL12M"/>
    <property type="match status" value="1"/>
</dbReference>
<dbReference type="Pfam" id="PF00542">
    <property type="entry name" value="Ribosomal_L12"/>
    <property type="match status" value="1"/>
</dbReference>
<dbReference type="Pfam" id="PF16320">
    <property type="entry name" value="Ribosomal_L12_N"/>
    <property type="match status" value="1"/>
</dbReference>
<dbReference type="SUPFAM" id="SSF54736">
    <property type="entry name" value="ClpS-like"/>
    <property type="match status" value="1"/>
</dbReference>
<dbReference type="SUPFAM" id="SSF48300">
    <property type="entry name" value="Ribosomal protein L7/12, oligomerisation (N-terminal) domain"/>
    <property type="match status" value="1"/>
</dbReference>
<keyword id="KW-0687">Ribonucleoprotein</keyword>
<keyword id="KW-0689">Ribosomal protein</keyword>
<accession>Q0SQD5</accession>
<sequence length="121" mass="12622">MTKEQIIEAIKEMSVLELNELVKACEEEFGVSAAAPVAVVGGAAAGAAAEEKSEFDVVLTNAGANKIKVIKAVRELTGLGLKEAKEIVDGAPKTLKEAVAKEEAEDMKAKLAEVGAEVELK</sequence>